<evidence type="ECO:0000255" key="1">
    <source>
        <dbReference type="HAMAP-Rule" id="MF_00815"/>
    </source>
</evidence>
<dbReference type="EMBL" id="CP001033">
    <property type="protein sequence ID" value="ACB90745.1"/>
    <property type="molecule type" value="Genomic_DNA"/>
</dbReference>
<dbReference type="RefSeq" id="WP_000301210.1">
    <property type="nucleotide sequence ID" value="NC_010582.1"/>
</dbReference>
<dbReference type="SMR" id="B2IQX1"/>
<dbReference type="KEGG" id="spw:SPCG_1493"/>
<dbReference type="HOGENOM" id="CLU_050669_0_1_9"/>
<dbReference type="GO" id="GO:0005886">
    <property type="term" value="C:plasma membrane"/>
    <property type="evidence" value="ECO:0007669"/>
    <property type="project" value="UniProtKB-SubCell"/>
</dbReference>
<dbReference type="GO" id="GO:0045259">
    <property type="term" value="C:proton-transporting ATP synthase complex"/>
    <property type="evidence" value="ECO:0007669"/>
    <property type="project" value="UniProtKB-KW"/>
</dbReference>
<dbReference type="GO" id="GO:0005524">
    <property type="term" value="F:ATP binding"/>
    <property type="evidence" value="ECO:0007669"/>
    <property type="project" value="UniProtKB-UniRule"/>
</dbReference>
<dbReference type="GO" id="GO:0046933">
    <property type="term" value="F:proton-transporting ATP synthase activity, rotational mechanism"/>
    <property type="evidence" value="ECO:0007669"/>
    <property type="project" value="UniProtKB-UniRule"/>
</dbReference>
<dbReference type="GO" id="GO:0042777">
    <property type="term" value="P:proton motive force-driven plasma membrane ATP synthesis"/>
    <property type="evidence" value="ECO:0007669"/>
    <property type="project" value="UniProtKB-UniRule"/>
</dbReference>
<dbReference type="CDD" id="cd12151">
    <property type="entry name" value="F1-ATPase_gamma"/>
    <property type="match status" value="1"/>
</dbReference>
<dbReference type="FunFam" id="3.40.1380.10:FF:000002">
    <property type="entry name" value="ATP synthase gamma chain"/>
    <property type="match status" value="1"/>
</dbReference>
<dbReference type="Gene3D" id="3.40.1380.10">
    <property type="match status" value="1"/>
</dbReference>
<dbReference type="Gene3D" id="1.10.287.80">
    <property type="entry name" value="ATP synthase, gamma subunit, helix hairpin domain"/>
    <property type="match status" value="1"/>
</dbReference>
<dbReference type="HAMAP" id="MF_00815">
    <property type="entry name" value="ATP_synth_gamma_bact"/>
    <property type="match status" value="1"/>
</dbReference>
<dbReference type="InterPro" id="IPR035968">
    <property type="entry name" value="ATP_synth_F1_ATPase_gsu"/>
</dbReference>
<dbReference type="InterPro" id="IPR000131">
    <property type="entry name" value="ATP_synth_F1_gsu"/>
</dbReference>
<dbReference type="InterPro" id="IPR023632">
    <property type="entry name" value="ATP_synth_F1_gsu_CS"/>
</dbReference>
<dbReference type="NCBIfam" id="TIGR01146">
    <property type="entry name" value="ATPsyn_F1gamma"/>
    <property type="match status" value="1"/>
</dbReference>
<dbReference type="NCBIfam" id="NF004147">
    <property type="entry name" value="PRK05621.2-1"/>
    <property type="match status" value="1"/>
</dbReference>
<dbReference type="PANTHER" id="PTHR11693">
    <property type="entry name" value="ATP SYNTHASE GAMMA CHAIN"/>
    <property type="match status" value="1"/>
</dbReference>
<dbReference type="PANTHER" id="PTHR11693:SF22">
    <property type="entry name" value="ATP SYNTHASE SUBUNIT GAMMA, MITOCHONDRIAL"/>
    <property type="match status" value="1"/>
</dbReference>
<dbReference type="Pfam" id="PF00231">
    <property type="entry name" value="ATP-synt"/>
    <property type="match status" value="1"/>
</dbReference>
<dbReference type="PRINTS" id="PR00126">
    <property type="entry name" value="ATPASEGAMMA"/>
</dbReference>
<dbReference type="SUPFAM" id="SSF52943">
    <property type="entry name" value="ATP synthase (F1-ATPase), gamma subunit"/>
    <property type="match status" value="1"/>
</dbReference>
<dbReference type="PROSITE" id="PS00153">
    <property type="entry name" value="ATPASE_GAMMA"/>
    <property type="match status" value="1"/>
</dbReference>
<gene>
    <name evidence="1" type="primary">atpG</name>
    <name type="ordered locus">SPCG_1493</name>
</gene>
<reference key="1">
    <citation type="journal article" date="2009" name="BMC Genomics">
        <title>Genome evolution driven by host adaptations results in a more virulent and antimicrobial-resistant Streptococcus pneumoniae serotype 14.</title>
        <authorList>
            <person name="Ding F."/>
            <person name="Tang P."/>
            <person name="Hsu M.-H."/>
            <person name="Cui P."/>
            <person name="Hu S."/>
            <person name="Yu J."/>
            <person name="Chiu C.-H."/>
        </authorList>
    </citation>
    <scope>NUCLEOTIDE SEQUENCE [LARGE SCALE GENOMIC DNA]</scope>
    <source>
        <strain>CGSP14</strain>
    </source>
</reference>
<proteinExistence type="inferred from homology"/>
<feature type="chain" id="PRO_1000134214" description="ATP synthase gamma chain">
    <location>
        <begin position="1"/>
        <end position="292"/>
    </location>
</feature>
<accession>B2IQX1</accession>
<name>ATPG_STRPS</name>
<comment type="function">
    <text evidence="1">Produces ATP from ADP in the presence of a proton gradient across the membrane. The gamma chain is believed to be important in regulating ATPase activity and the flow of protons through the CF(0) complex.</text>
</comment>
<comment type="subunit">
    <text evidence="1">F-type ATPases have 2 components, CF(1) - the catalytic core - and CF(0) - the membrane proton channel. CF(1) has five subunits: alpha(3), beta(3), gamma(1), delta(1), epsilon(1). CF(0) has three main subunits: a, b and c.</text>
</comment>
<comment type="subcellular location">
    <subcellularLocation>
        <location evidence="1">Cell membrane</location>
        <topology evidence="1">Peripheral membrane protein</topology>
    </subcellularLocation>
</comment>
<comment type="similarity">
    <text evidence="1">Belongs to the ATPase gamma chain family.</text>
</comment>
<sequence length="292" mass="32309">MAVSLNDIKTKIASTKNTSQITNAMQMVSAAKLGRSEEAARNFQVYAQKVRKLLTDILHGNGAGASTNPMLISRSVKKTGYIVITSDRGLVGGYNSSILKAVMELKEEYHPDGKGFEMICIGGMGADFFKARGIQPLYELRGLADQPSFDQVRKIISKTVEMYQNELFDELYVCYNHHVNTLTSQMRVEQMLPIVDLDPNEADEEYSLTFELETSREEILEQLLPQFAESMIYGAIIDAKTAENAAGMTAMQTATDNAKKVINDLTIQYNRARQAAITQEITEIVAGASALE</sequence>
<protein>
    <recommendedName>
        <fullName evidence="1">ATP synthase gamma chain</fullName>
    </recommendedName>
    <alternativeName>
        <fullName evidence="1">ATP synthase F1 sector gamma subunit</fullName>
    </alternativeName>
    <alternativeName>
        <fullName evidence="1">F-ATPase gamma subunit</fullName>
    </alternativeName>
</protein>
<organism>
    <name type="scientific">Streptococcus pneumoniae (strain CGSP14)</name>
    <dbReference type="NCBI Taxonomy" id="516950"/>
    <lineage>
        <taxon>Bacteria</taxon>
        <taxon>Bacillati</taxon>
        <taxon>Bacillota</taxon>
        <taxon>Bacilli</taxon>
        <taxon>Lactobacillales</taxon>
        <taxon>Streptococcaceae</taxon>
        <taxon>Streptococcus</taxon>
    </lineage>
</organism>
<keyword id="KW-0066">ATP synthesis</keyword>
<keyword id="KW-1003">Cell membrane</keyword>
<keyword id="KW-0139">CF(1)</keyword>
<keyword id="KW-0375">Hydrogen ion transport</keyword>
<keyword id="KW-0406">Ion transport</keyword>
<keyword id="KW-0472">Membrane</keyword>
<keyword id="KW-0813">Transport</keyword>